<proteinExistence type="evidence at protein level"/>
<dbReference type="EC" id="3.4.21.-"/>
<dbReference type="EC" id="3.4.22.45" evidence="2"/>
<dbReference type="EC" id="3.6.4.-"/>
<dbReference type="EC" id="3.4.22.44"/>
<dbReference type="EC" id="2.7.7.48"/>
<dbReference type="EMBL" id="Z48506">
    <property type="protein sequence ID" value="CAA88417.1"/>
    <property type="molecule type" value="Genomic_RNA"/>
</dbReference>
<dbReference type="RefSeq" id="NP_612585.1">
    <property type="nucleotide sequence ID" value="NC_003501.1"/>
</dbReference>
<dbReference type="MINT" id="Q65730"/>
<dbReference type="GeneID" id="935897"/>
<dbReference type="KEGG" id="vg:935897"/>
<dbReference type="Proteomes" id="UP000000521">
    <property type="component" value="Segment"/>
</dbReference>
<dbReference type="GO" id="GO:0019029">
    <property type="term" value="C:helical viral capsid"/>
    <property type="evidence" value="ECO:0007669"/>
    <property type="project" value="UniProtKB-KW"/>
</dbReference>
<dbReference type="GO" id="GO:0044161">
    <property type="term" value="C:host cell cytoplasmic vesicle"/>
    <property type="evidence" value="ECO:0007669"/>
    <property type="project" value="UniProtKB-SubCell"/>
</dbReference>
<dbReference type="GO" id="GO:0005524">
    <property type="term" value="F:ATP binding"/>
    <property type="evidence" value="ECO:0007669"/>
    <property type="project" value="UniProtKB-KW"/>
</dbReference>
<dbReference type="GO" id="GO:0004197">
    <property type="term" value="F:cysteine-type endopeptidase activity"/>
    <property type="evidence" value="ECO:0007669"/>
    <property type="project" value="InterPro"/>
</dbReference>
<dbReference type="GO" id="GO:0004386">
    <property type="term" value="F:helicase activity"/>
    <property type="evidence" value="ECO:0007669"/>
    <property type="project" value="UniProtKB-KW"/>
</dbReference>
<dbReference type="GO" id="GO:0016818">
    <property type="term" value="F:hydrolase activity, acting on acid anhydrides, in phosphorus-containing anhydrides"/>
    <property type="evidence" value="ECO:0007669"/>
    <property type="project" value="InterPro"/>
</dbReference>
<dbReference type="GO" id="GO:0003723">
    <property type="term" value="F:RNA binding"/>
    <property type="evidence" value="ECO:0007669"/>
    <property type="project" value="InterPro"/>
</dbReference>
<dbReference type="GO" id="GO:0003968">
    <property type="term" value="F:RNA-directed RNA polymerase activity"/>
    <property type="evidence" value="ECO:0007669"/>
    <property type="project" value="UniProtKB-KW"/>
</dbReference>
<dbReference type="GO" id="GO:0008236">
    <property type="term" value="F:serine-type peptidase activity"/>
    <property type="evidence" value="ECO:0007669"/>
    <property type="project" value="UniProtKB-KW"/>
</dbReference>
<dbReference type="GO" id="GO:0005198">
    <property type="term" value="F:structural molecule activity"/>
    <property type="evidence" value="ECO:0007669"/>
    <property type="project" value="InterPro"/>
</dbReference>
<dbReference type="GO" id="GO:0006351">
    <property type="term" value="P:DNA-templated transcription"/>
    <property type="evidence" value="ECO:0007669"/>
    <property type="project" value="InterPro"/>
</dbReference>
<dbReference type="GO" id="GO:0006508">
    <property type="term" value="P:proteolysis"/>
    <property type="evidence" value="ECO:0007669"/>
    <property type="project" value="UniProtKB-KW"/>
</dbReference>
<dbReference type="GO" id="GO:0052170">
    <property type="term" value="P:symbiont-mediated suppression of host innate immune response"/>
    <property type="evidence" value="ECO:0007669"/>
    <property type="project" value="UniProtKB-KW"/>
</dbReference>
<dbReference type="GO" id="GO:0039694">
    <property type="term" value="P:viral RNA genome replication"/>
    <property type="evidence" value="ECO:0007669"/>
    <property type="project" value="InterPro"/>
</dbReference>
<dbReference type="CDD" id="cd23175">
    <property type="entry name" value="ps-ssRNAv_Potyviridae_RdRp"/>
    <property type="match status" value="1"/>
</dbReference>
<dbReference type="Gene3D" id="3.30.70.270">
    <property type="match status" value="1"/>
</dbReference>
<dbReference type="Gene3D" id="3.90.70.150">
    <property type="entry name" value="Helper component proteinase"/>
    <property type="match status" value="1"/>
</dbReference>
<dbReference type="Gene3D" id="3.40.50.300">
    <property type="entry name" value="P-loop containing nucleotide triphosphate hydrolases"/>
    <property type="match status" value="2"/>
</dbReference>
<dbReference type="Gene3D" id="2.40.10.10">
    <property type="entry name" value="Trypsin-like serine proteases"/>
    <property type="match status" value="2"/>
</dbReference>
<dbReference type="InterPro" id="IPR011545">
    <property type="entry name" value="DEAD/DEAH_box_helicase_dom"/>
</dbReference>
<dbReference type="InterPro" id="IPR043502">
    <property type="entry name" value="DNA/RNA_pol_sf"/>
</dbReference>
<dbReference type="InterPro" id="IPR001456">
    <property type="entry name" value="HC-pro"/>
</dbReference>
<dbReference type="InterPro" id="IPR031159">
    <property type="entry name" value="HC_PRO_CPD_dom"/>
</dbReference>
<dbReference type="InterPro" id="IPR042308">
    <property type="entry name" value="HC_PRO_CPD_sf"/>
</dbReference>
<dbReference type="InterPro" id="IPR014001">
    <property type="entry name" value="Helicase_ATP-bd"/>
</dbReference>
<dbReference type="InterPro" id="IPR001650">
    <property type="entry name" value="Helicase_C-like"/>
</dbReference>
<dbReference type="InterPro" id="IPR027417">
    <property type="entry name" value="P-loop_NTPase"/>
</dbReference>
<dbReference type="InterPro" id="IPR025910">
    <property type="entry name" value="P1_Ser_Pept_dom"/>
</dbReference>
<dbReference type="InterPro" id="IPR002540">
    <property type="entry name" value="Pept_S30_P1_potyvir"/>
</dbReference>
<dbReference type="InterPro" id="IPR009003">
    <property type="entry name" value="Peptidase_S1_PA"/>
</dbReference>
<dbReference type="InterPro" id="IPR043504">
    <property type="entry name" value="Peptidase_S1_PA_chymotrypsin"/>
</dbReference>
<dbReference type="InterPro" id="IPR001592">
    <property type="entry name" value="Poty_coat"/>
</dbReference>
<dbReference type="InterPro" id="IPR001730">
    <property type="entry name" value="Potyv_NIa-pro_dom"/>
</dbReference>
<dbReference type="InterPro" id="IPR013648">
    <property type="entry name" value="PP_Potyviridae"/>
</dbReference>
<dbReference type="InterPro" id="IPR043128">
    <property type="entry name" value="Rev_trsase/Diguanyl_cyclase"/>
</dbReference>
<dbReference type="InterPro" id="IPR001205">
    <property type="entry name" value="RNA-dir_pol_C"/>
</dbReference>
<dbReference type="InterPro" id="IPR007094">
    <property type="entry name" value="RNA-dir_pol_PSvirus"/>
</dbReference>
<dbReference type="PANTHER" id="PTHR18934">
    <property type="entry name" value="ATP-DEPENDENT RNA HELICASE"/>
    <property type="match status" value="1"/>
</dbReference>
<dbReference type="PANTHER" id="PTHR18934:SF99">
    <property type="entry name" value="ATP-DEPENDENT RNA HELICASE DHX37-RELATED"/>
    <property type="match status" value="1"/>
</dbReference>
<dbReference type="Pfam" id="PF00270">
    <property type="entry name" value="DEAD"/>
    <property type="match status" value="1"/>
</dbReference>
<dbReference type="Pfam" id="PF00271">
    <property type="entry name" value="Helicase_C"/>
    <property type="match status" value="1"/>
</dbReference>
<dbReference type="Pfam" id="PF00863">
    <property type="entry name" value="Peptidase_C4"/>
    <property type="match status" value="1"/>
</dbReference>
<dbReference type="Pfam" id="PF00851">
    <property type="entry name" value="Peptidase_C6"/>
    <property type="match status" value="1"/>
</dbReference>
<dbReference type="Pfam" id="PF13611">
    <property type="entry name" value="Peptidase_S76"/>
    <property type="match status" value="1"/>
</dbReference>
<dbReference type="Pfam" id="PF00767">
    <property type="entry name" value="Poty_coat"/>
    <property type="match status" value="1"/>
</dbReference>
<dbReference type="Pfam" id="PF08440">
    <property type="entry name" value="Poty_PP"/>
    <property type="match status" value="1"/>
</dbReference>
<dbReference type="Pfam" id="PF00680">
    <property type="entry name" value="RdRP_1"/>
    <property type="match status" value="1"/>
</dbReference>
<dbReference type="PRINTS" id="PR00966">
    <property type="entry name" value="NIAPOTYPTASE"/>
</dbReference>
<dbReference type="SMART" id="SM00487">
    <property type="entry name" value="DEXDc"/>
    <property type="match status" value="1"/>
</dbReference>
<dbReference type="SMART" id="SM00490">
    <property type="entry name" value="HELICc"/>
    <property type="match status" value="1"/>
</dbReference>
<dbReference type="SUPFAM" id="SSF56672">
    <property type="entry name" value="DNA/RNA polymerases"/>
    <property type="match status" value="1"/>
</dbReference>
<dbReference type="SUPFAM" id="SSF52540">
    <property type="entry name" value="P-loop containing nucleoside triphosphate hydrolases"/>
    <property type="match status" value="1"/>
</dbReference>
<dbReference type="SUPFAM" id="SSF50494">
    <property type="entry name" value="Trypsin-like serine proteases"/>
    <property type="match status" value="1"/>
</dbReference>
<dbReference type="PROSITE" id="PS51744">
    <property type="entry name" value="HC_PRO_CPD"/>
    <property type="match status" value="1"/>
</dbReference>
<dbReference type="PROSITE" id="PS51192">
    <property type="entry name" value="HELICASE_ATP_BIND_1"/>
    <property type="match status" value="1"/>
</dbReference>
<dbReference type="PROSITE" id="PS51194">
    <property type="entry name" value="HELICASE_CTER"/>
    <property type="match status" value="1"/>
</dbReference>
<dbReference type="PROSITE" id="PS51436">
    <property type="entry name" value="POTYVIRUS_NIA_PRO"/>
    <property type="match status" value="1"/>
</dbReference>
<dbReference type="PROSITE" id="PS51871">
    <property type="entry name" value="PV_P1_PRO"/>
    <property type="match status" value="1"/>
</dbReference>
<dbReference type="PROSITE" id="PS50507">
    <property type="entry name" value="RDRP_SSRNA_POS"/>
    <property type="match status" value="1"/>
</dbReference>
<organism>
    <name type="scientific">Brome streak virus (strain 11-Cal)</name>
    <name type="common">BStV</name>
    <name type="synonym">Brome streak mosaic rymovirus</name>
    <dbReference type="NCBI Taxonomy" id="117138"/>
    <lineage>
        <taxon>Viruses</taxon>
        <taxon>Riboviria</taxon>
        <taxon>Orthornavirae</taxon>
        <taxon>Pisuviricota</taxon>
        <taxon>Stelpaviricetes</taxon>
        <taxon>Patatavirales</taxon>
        <taxon>Potyviridae</taxon>
        <taxon>Tritimovirus</taxon>
        <taxon>Brome streak mosaic virus</taxon>
    </lineage>
</organism>
<keyword id="KW-0067">ATP-binding</keyword>
<keyword id="KW-0167">Capsid protein</keyword>
<keyword id="KW-0191">Covalent protein-RNA linkage</keyword>
<keyword id="KW-1139">Helical capsid protein</keyword>
<keyword id="KW-0347">Helicase</keyword>
<keyword id="KW-1036">Host cytoplasmic vesicle</keyword>
<keyword id="KW-0945">Host-virus interaction</keyword>
<keyword id="KW-0378">Hydrolase</keyword>
<keyword id="KW-1090">Inhibition of host innate immune response by virus</keyword>
<keyword id="KW-0547">Nucleotide-binding</keyword>
<keyword id="KW-0548">Nucleotidyltransferase</keyword>
<keyword id="KW-0597">Phosphoprotein</keyword>
<keyword id="KW-0645">Protease</keyword>
<keyword id="KW-1185">Reference proteome</keyword>
<keyword id="KW-0696">RNA-directed RNA polymerase</keyword>
<keyword id="KW-0720">Serine protease</keyword>
<keyword id="KW-0941">Suppressor of RNA silencing</keyword>
<keyword id="KW-0788">Thiol protease</keyword>
<keyword id="KW-0808">Transferase</keyword>
<keyword id="KW-0899">Viral immunoevasion</keyword>
<keyword id="KW-0693">Viral RNA replication</keyword>
<keyword id="KW-0946">Virion</keyword>
<reference key="1">
    <citation type="journal article" date="1995" name="J. Gen. Virol.">
        <title>The complete nucleotide sequence and genome organization of the mite-transmitted brome streak mosaic rymovirus in comparison with those of potyviruses.</title>
        <authorList>
            <person name="Goetz R."/>
            <person name="Maiss E."/>
        </authorList>
    </citation>
    <scope>NUCLEOTIDE SEQUENCE [GENOMIC RNA]</scope>
</reference>
<reference key="2">
    <citation type="journal article" date="2001" name="Virus Res.">
        <title>Potyvirus proteins: a wealth of functions.</title>
        <authorList>
            <person name="Urcuqui-Inchima S."/>
            <person name="Haenni A.L."/>
            <person name="Bernardi F."/>
        </authorList>
    </citation>
    <scope>REVIEW</scope>
</reference>
<reference key="3">
    <citation type="journal article" date="2021" name="PLoS ONE">
        <title>Analysis of proteolytic processing sites in potyvirus polyproteins revealed differential amino acid preferences of NIa-Pro protease in each of seven cleavage sites.</title>
        <authorList>
            <person name="Goh C.J."/>
            <person name="Hahn Y."/>
        </authorList>
    </citation>
    <scope>PROTEOLYTIC CLEAVAGE (GENOME POLYPROTEIN)</scope>
</reference>
<accession>Q65730</accession>
<organismHost>
    <name type="scientific">Bromus</name>
    <dbReference type="NCBI Taxonomy" id="4501"/>
</organismHost>
<organismHost>
    <name type="scientific">Hordeum murinum</name>
    <name type="common">Mouse barley</name>
    <name type="synonym">Critesion murinum</name>
    <dbReference type="NCBI Taxonomy" id="97361"/>
</organismHost>
<sequence length="3093" mass="348106">MQQTHVKQVWRPKTASSKVKTSNMVYLAEESSPLAKTELKEDAVVAADMSVINADDAVYGHALEGKYSERKALPARSNETIVSFASGEDGLFLDRAACGSIFKTRTGKDTPIATAIRAATRRGLAYDIAAQLYMCPKCCSASDKVLYFDTNHNDSCQWYLDNCRAVINKDWTLDVIETYNVFPVLVTEEEERRTLEAVDIALKPLGTVPVHDVVQVYDQKIGEHKEVERNQEAAHGSEPAIITTTPVLRRQCIEKRLLRHVHQANKVIANTVEIYDLMTETSQICAEKAIPLVFVDYEKKKRIRPRVPLRHVLESNNVDPSDDLYADVVPFLKHYGTCGRPVGVINPRDIKPGWSGVVLLQDELPESLHQECVDGVFVVQGIGPDGQLKNALKTTTGERIEYYSSKRRMAVNAHVPKAHSFCKYSSLTETLMELDYLRVISALADVHDPQCVECHKERNERSFIENLKYTQQGAQNLFNAGTGMGLAFVASIASGQLMIQRQQPQSSSSIVDQTPRTNEDGSLSHNINLLLTPEVVDIWRSMKQMVHLPNRKLYMASFNDQFGNFDFIPNSTLQGVFPDFTMPVTIALNDDDKVETNYRHVDKNSTIETCVEGLYTQFDAAYWTKKAAQVHKIQPIDQCGMEIGNIALKLCHWEGDVALFSPIIRPTPGHLMFGSTDRLLRIPDMTNARHYVPKVGYCYLYLFALAMNFCDGENRVTVDAYINKTCRELGAWPKFGEVLRALDRMATYYGCYDAVVPVMLVDHVQRTIHVPSPFGIVQSGMHMIQINNLGDLIKLDTMGASELKEYEIGGFRETYKSITKCVKSKSAFMEKLNQDNEWLVDMICNPSTLFVLSQLMDTHGLILKDVENSFDRLAALLALKELGSALGPLLTTRKRVALYMQSLSKVDELVPHLGMPTGAMNLLKSEIELIQNAIVEEQDMAEIDRVEGKKSILERRDEMFAPCVYNEFINSFGYVSLPGIAYRLTYTGVGARIGRGCEHLKTVWSGSWIPEIHLPENLRSNTWSAIKKYTVYSGGTAWRYMKLKIVESATQILVAAVITAIGSWLLKKLLKFIRHEKGRLNEVVVFQSKQEELFISKFMAVCFVISTFFSLDMSNAIYSSLTKFRAIFSILSVGSIYQSGALEKLEEQLGHVDTFHEFKLYDHDATHANIAPSVQSFGTWLDTRVLAGQQGCDPLEGRHTKFEMNKNTRDAIAARVLADKDNEFLVMGHVGCGKSTYFPVALSKQARVLICEPTRVLVTNLHDSMMHTCQVAPSVMMRNHRCITGSSIMVQTYGFALHYLVNNPENLQQYDFVLFDEVHHTCAEKVVLYNWLKGRDWGGKIVKLTATDRSPSAEIKAQKSLDIMTLPTMTPLDFVKEQGLSTKADASKHGKVILVFLTSFREVDSCYDELKRKENFDAIKADSRNLRNKTSLADLISECKKEFIYIFATNILQTGINIEADVVVDFGYKIVPTYDVDNRMLTTTRKPVNKADRIQRLGRVARMKAGVAMKIGATIDPEAYDDEVTATEAALLSFAMQVPPVLRNVNLQIFQRITREQVVTAARFEHQLSYMVWMVNKDGSMPTKLYDLFSPLLLSQGNMRLSPYYSSLYDSDTFMTVKNYVDIGYLKHDRTTNQRLPFHCHDVSTTFAMKVADRFEDSRAPSTYSIRVPAVNLRHTAVKLSTDPAQVGMILVVIGEALVHQKNILEQLKSTRTQLDNYNSCILVPNWNVRGKLDDAINRVERNVSILENQKNSVEKMSVARGYDELKELLEENHAVAAHVMYQKGPQKFIDDVLLQKRDFSWMPYISVGAACLMAGCAWYMLYRQRAKHEAKFEGKASRVKASKQKAFDDKMARADNYTYYETTDELHNHAREWNDYPTDWVDKVRKKANVHAMQFGREAPRRDVRNDRPFFNFYGIDEKLYDTVTFHDMAASFSVEQPITAMEVEEAFEKIYLNRQEDEAFFDHPMPKKILAEFKGKDGKVINVEMEPHNPRKANRRGLPVGYADHRGEFRQAKPAEEGPIKFERKALNPKATPYAVFESKALYGGPRCYEHITNNQVLLAGPSGYLNGLITGSKLLAPYHFVKDISSDSQDPSRMIARFGTYNLGNILNLQVVKFTMIDLIGLDLPVEFQPRRTLKCFRVPVIGEKAVLVLSRYSKEGWKSCVSAETEITPYGENEELLWRHRITTEVGDCGATMVALSDQKIVGFHSLGGISMNYFVPVTQELLDFLSSKTEKPLVPWRFSEDQVDVGGLYIHNDFDKFPFVKTIQKLVGFQNGHMIKYCGEGFTPVARSENRLSRQHVISGQRESFIHFVEASSKWRPLITPMLGRLQPSALNREAYYKDVLKYDKPIRLGTVHEEAFQSAVINVIRILENAGFERGGVKACFDYGKIFNDLNLDAAMGALYAGKKKDYFVEATDEEIEEMFLRSAGKICANGHGVWSALLKAELRPAEKVAANKTRTFTSAPIDILFGAKAVVDDFNKQFYKRHLLGPWTVGINKFNKGWDLLARSLMRYEWFIDADGSQFDSSITPLLMNAVLTIRLYFMERDDITELMLRNLYTQIISTCMLAEDGLIVQKHRGNNSGQPSTVVDNTLCLMIAMEYARQRAISDGHLNMQMRYVCNGDDLLINANEEAKDVVQGKYEQYIKELELNYCFDDAFQSIEGVEFMSHKFMLRNGIYIPKLARHRIVAILEWQRSAEPQAIKSAILAACVEAFGYDDLTELIREYAISLEPVWGSFLPTDGEIEQLYFEGIAKQEVARCLAGVDDVCKFESAASGTNEAVDEVLKAAGDDEALARANAAATSGATTPAQNVGAGTTTPAKATPQSGRRPSFGSLIDNPIGGNGVQDVADRTSGIVFPVPTRKSTSLYLPPKVKLRATPERIEKVRKYLPDPQQIDLRYSTQQELNDWIKASADGLGQTEEAFIDNILPGWIVHCIVNTTSSENRKAGSWRCVTNAGTADEEQVLYDIEPMYSAANPTMRAIMRHFSDLARLVIAESFKQGRPLIPKGYIKAGVLDASSAAAACDFVVRDRHDTATFVQVQNQVLVNRVSGITNRLFAQAMPSAGANEDMARHDAQDAAEGIHNLGGARAF</sequence>
<feature type="chain" id="PRO_0000419992" description="Genome polyprotein">
    <location>
        <begin position="1"/>
        <end position="3093"/>
    </location>
</feature>
<feature type="chain" id="PRO_0000040233" description="P1 protease">
    <location>
        <begin position="1"/>
        <end position="403"/>
    </location>
</feature>
<feature type="chain" id="PRO_0000040234" description="Helper component proteinase">
    <location>
        <begin position="404"/>
        <end position="809"/>
    </location>
</feature>
<feature type="chain" id="PRO_0000040235" description="Protein P3">
    <location>
        <begin position="810"/>
        <end position="1087"/>
    </location>
</feature>
<feature type="chain" id="PRO_0000040236" description="6 kDa protein 1">
    <location>
        <begin position="1088"/>
        <end position="1138"/>
    </location>
</feature>
<feature type="chain" id="PRO_0000040237" description="Cytoplasmic inclusion protein">
    <location>
        <begin position="1139"/>
        <end position="1783"/>
    </location>
</feature>
<feature type="chain" id="PRO_0000040238" description="6 kDa protein 2">
    <location>
        <begin position="1784"/>
        <end position="1834"/>
    </location>
</feature>
<feature type="chain" id="PRO_0000040239" description="Viral genome-linked protein">
    <location>
        <begin position="1835"/>
        <end position="2040"/>
    </location>
</feature>
<feature type="chain" id="PRO_0000040240" description="Nuclear inclusion protein A">
    <location>
        <begin position="2041"/>
        <end position="2275"/>
    </location>
</feature>
<feature type="chain" id="PRO_0000040241" description="Nuclear inclusion protein B">
    <location>
        <begin position="2276"/>
        <end position="2773"/>
    </location>
</feature>
<feature type="chain" id="PRO_0000040242" description="Capsid protein">
    <location>
        <begin position="2774"/>
        <end position="3093"/>
    </location>
</feature>
<feature type="domain" description="Peptidase S30" evidence="13">
    <location>
        <begin position="255"/>
        <end position="403"/>
    </location>
</feature>
<feature type="domain" description="Peptidase C6" evidence="12">
    <location>
        <begin position="690"/>
        <end position="809"/>
    </location>
</feature>
<feature type="domain" description="Helicase ATP-binding" evidence="9">
    <location>
        <begin position="1215"/>
        <end position="1366"/>
    </location>
</feature>
<feature type="domain" description="Helicase C-terminal" evidence="10">
    <location>
        <begin position="1367"/>
        <end position="1546"/>
    </location>
</feature>
<feature type="domain" description="Peptidase C4" evidence="11">
    <location>
        <begin position="2041"/>
        <end position="2257"/>
    </location>
</feature>
<feature type="domain" description="RdRp catalytic" evidence="8">
    <location>
        <begin position="2516"/>
        <end position="2639"/>
    </location>
</feature>
<feature type="region of interest" description="Disordered" evidence="14">
    <location>
        <begin position="2800"/>
        <end position="2842"/>
    </location>
</feature>
<feature type="short sequence motif" description="DEVH box">
    <location>
        <begin position="1316"/>
        <end position="1319"/>
    </location>
</feature>
<feature type="short sequence motif" description="Nuclear localization signal" evidence="7">
    <location>
        <begin position="1883"/>
        <end position="1895"/>
    </location>
</feature>
<feature type="compositionally biased region" description="Low complexity" evidence="14">
    <location>
        <begin position="2800"/>
        <end position="2826"/>
    </location>
</feature>
<feature type="active site" description="For P1 proteinase activity" evidence="13">
    <location>
        <position position="311"/>
    </location>
</feature>
<feature type="active site" description="For P1 proteinase activity" evidence="13">
    <location>
        <position position="323"/>
    </location>
</feature>
<feature type="active site" description="For P1 proteinase activity" evidence="13">
    <location>
        <position position="355"/>
    </location>
</feature>
<feature type="active site" description="For helper component proteinase activity" evidence="12">
    <location>
        <position position="698"/>
    </location>
</feature>
<feature type="active site" description="For helper component proteinase activity" evidence="12">
    <location>
        <position position="769"/>
    </location>
</feature>
<feature type="active site" description="For nuclear inclusion protein A activity" evidence="11">
    <location>
        <position position="2082"/>
    </location>
</feature>
<feature type="active site" description="For nuclear inclusion protein A activity" evidence="11">
    <location>
        <position position="2121"/>
    </location>
</feature>
<feature type="active site" description="For nuclear inclusion protein A activity" evidence="11">
    <location>
        <position position="2193"/>
    </location>
</feature>
<feature type="binding site" evidence="9">
    <location>
        <begin position="1228"/>
        <end position="1235"/>
    </location>
    <ligand>
        <name>ATP</name>
        <dbReference type="ChEBI" id="CHEBI:30616"/>
    </ligand>
</feature>
<feature type="site" description="Cleavage; by P1 proteinase" evidence="13">
    <location>
        <begin position="403"/>
        <end position="404"/>
    </location>
</feature>
<feature type="site" description="Cleavage; by autolysis" evidence="12">
    <location>
        <begin position="809"/>
        <end position="810"/>
    </location>
</feature>
<feature type="site" description="Cleavage; by NIa-pro" evidence="16">
    <location>
        <begin position="1087"/>
        <end position="1088"/>
    </location>
</feature>
<feature type="site" description="Cleavage; by NIa-pro" evidence="16">
    <location>
        <begin position="1138"/>
        <end position="1139"/>
    </location>
</feature>
<feature type="site" description="Cleavage; by NIa-pro" evidence="16">
    <location>
        <begin position="1783"/>
        <end position="1784"/>
    </location>
</feature>
<feature type="site" description="Cleavage; by NIa-pro" evidence="16">
    <location>
        <begin position="1834"/>
        <end position="1835"/>
    </location>
</feature>
<feature type="site" description="Cleavage; by NIa-pro" evidence="16">
    <location>
        <begin position="2040"/>
        <end position="2041"/>
    </location>
</feature>
<feature type="site" description="Cleavage; by NIa-pro" evidence="16">
    <location>
        <begin position="2275"/>
        <end position="2276"/>
    </location>
</feature>
<feature type="site" description="Cleavage; by NIa-pro" evidence="16">
    <location>
        <begin position="2773"/>
        <end position="2774"/>
    </location>
</feature>
<feature type="modified residue" description="O-(5'-phospho-RNA)-tyrosine" evidence="3">
    <location>
        <position position="1915"/>
    </location>
</feature>
<comment type="function">
    <molecule>Helper component proteinase</molecule>
    <text evidence="2">Required for aphid transmission and also has proteolytic activity. Only cleaves a Gly-Gly dipeptide at its own C-terminus. Interacts with virions and aphid stylets. Acts as a suppressor of RNA-mediated gene silencing, also known as post-transcriptional gene silencing (PTGS), a mechanism of plant viral defense that limits the accumulation of viral RNAs. May have RNA-binding activity.</text>
</comment>
<comment type="function">
    <molecule>Cytoplasmic inclusion protein</molecule>
    <text>Has helicase activity. It may be involved in replication.</text>
</comment>
<comment type="function">
    <molecule>6 kDa protein 1</molecule>
    <text evidence="4 6">Indispensable for virus replication (By similarity). Reduces the abundance of host transcripts related to jasmonic acid biosynthesis therefore altering the host defenses (By similarity). In order to increase its own stability, decreases host protein degradation pathways (By similarity).</text>
</comment>
<comment type="function">
    <molecule>6 kDa protein 2</molecule>
    <text evidence="3">Indispensable for virus replication.</text>
</comment>
<comment type="function">
    <molecule>Viral genome-linked protein</molecule>
    <text evidence="5">Mediates the cap-independent, EIF4E-dependent translation of viral genomic RNAs (By similarity). Binds to the cap-binding site of host EIF4E and thus interferes with the host EIF4E-dependent mRNA export and translation (By similarity). VPg-RNA directly binds EIF4E and is a template for transcription (By similarity). Also forms trimeric complexes with EIF4E-EIF4G, which are templates for translation (By similarity).</text>
</comment>
<comment type="function">
    <molecule>Nuclear inclusion protein A</molecule>
    <text evidence="2">Has RNA-binding and proteolytic activities.</text>
</comment>
<comment type="function">
    <molecule>Nuclear inclusion protein B</molecule>
    <text>An RNA-dependent RNA polymerase that plays an essential role in the virus replication.</text>
</comment>
<comment type="function">
    <molecule>Capsid protein</molecule>
    <text evidence="2">Involved in aphid transmission, cell-to-cell and systemis movement, encapsidation of the viral RNA and in the regulation of viral RNA amplification.</text>
</comment>
<comment type="catalytic activity">
    <molecule>Nuclear inclusion protein B</molecule>
    <reaction evidence="8">
        <text>RNA(n) + a ribonucleoside 5'-triphosphate = RNA(n+1) + diphosphate</text>
        <dbReference type="Rhea" id="RHEA:21248"/>
        <dbReference type="Rhea" id="RHEA-COMP:14527"/>
        <dbReference type="Rhea" id="RHEA-COMP:17342"/>
        <dbReference type="ChEBI" id="CHEBI:33019"/>
        <dbReference type="ChEBI" id="CHEBI:61557"/>
        <dbReference type="ChEBI" id="CHEBI:140395"/>
        <dbReference type="EC" id="2.7.7.48"/>
    </reaction>
</comment>
<comment type="catalytic activity">
    <molecule>Nuclear inclusion protein A</molecule>
    <reaction evidence="2">
        <text>Hydrolyzes glutaminyl bonds, and activity is further restricted by preferences for the amino acids in P6 - P1' that vary with the species of potyvirus, e.g. Glu-Xaa-Xaa-Tyr-Xaa-Gln-|-(Ser or Gly) for the enzyme from tobacco etch virus. The natural substrate is the viral polyprotein, but other proteins and oligopeptides containing the appropriate consensus sequence are also cleaved.</text>
        <dbReference type="EC" id="3.4.22.44"/>
    </reaction>
</comment>
<comment type="catalytic activity">
    <molecule>Helper component proteinase</molecule>
    <reaction evidence="2">
        <text>Hydrolyzes a Gly-|-Gly bond at its own C-terminus, commonly in the sequence -Tyr-Xaa-Val-Gly-|-Gly, in the processing of the potyviral polyprotein.</text>
        <dbReference type="EC" id="3.4.22.45"/>
    </reaction>
</comment>
<comment type="subcellular location">
    <molecule>6 kDa protein 1</molecule>
    <subcellularLocation>
        <location>Host cytoplasmic vesicle</location>
    </subcellularLocation>
    <text evidence="4">Probably colocalizes with 6K2-induced vesicles associated with host chloroplasts.</text>
</comment>
<comment type="subcellular location">
    <molecule>6 kDa protein 2</molecule>
    <subcellularLocation>
        <location evidence="3">Host cytoplasmic vesicle</location>
    </subcellularLocation>
    <text evidence="3">6K-induced vesicles associate with host chloroplasts.</text>
</comment>
<comment type="subcellular location">
    <molecule>Capsid protein</molecule>
    <subcellularLocation>
        <location evidence="15">Virion</location>
    </subcellularLocation>
</comment>
<comment type="domain">
    <molecule>Helper component proteinase</molecule>
    <text>The N-terminus is involved in interaction with stylets. The central part is involved in interaction with virions and the C-terminus is involved in cell-to cell movement of the virus.</text>
</comment>
<comment type="PTM">
    <molecule>Viral genome-linked protein</molecule>
    <text evidence="3">VPg is uridylylated by the polymerase and is covalently attached to the 5'-end of the genomic RNA. This uridylylated form acts as a nucleotide-peptide primer for the polymerase (By similarity).</text>
</comment>
<comment type="PTM">
    <molecule>Genome polyprotein</molecule>
    <text evidence="1">Genome polyprotein of potyviruses undergoes post-translational proteolytic processing by the main proteinase NIa-pro resulting in the production of at least ten individual proteins. The P1 proteinase and the HC-pro cleave only their respective C-termini autocatalytically. 6K1 is essential for proper proteolytic separation of P3 from CI (By similarity).</text>
</comment>
<comment type="similarity">
    <text evidence="15">Belongs to the potyviridae genome polyprotein family.</text>
</comment>
<name>POLG_BSTV1</name>
<evidence type="ECO:0000250" key="1"/>
<evidence type="ECO:0000250" key="2">
    <source>
        <dbReference type="UniProtKB" id="P04517"/>
    </source>
</evidence>
<evidence type="ECO:0000250" key="3">
    <source>
        <dbReference type="UniProtKB" id="P09814"/>
    </source>
</evidence>
<evidence type="ECO:0000250" key="4">
    <source>
        <dbReference type="UniProtKB" id="P13529"/>
    </source>
</evidence>
<evidence type="ECO:0000250" key="5">
    <source>
        <dbReference type="UniProtKB" id="P18247"/>
    </source>
</evidence>
<evidence type="ECO:0000250" key="6">
    <source>
        <dbReference type="UniProtKB" id="P89509"/>
    </source>
</evidence>
<evidence type="ECO:0000255" key="7"/>
<evidence type="ECO:0000255" key="8">
    <source>
        <dbReference type="PROSITE-ProRule" id="PRU00539"/>
    </source>
</evidence>
<evidence type="ECO:0000255" key="9">
    <source>
        <dbReference type="PROSITE-ProRule" id="PRU00541"/>
    </source>
</evidence>
<evidence type="ECO:0000255" key="10">
    <source>
        <dbReference type="PROSITE-ProRule" id="PRU00542"/>
    </source>
</evidence>
<evidence type="ECO:0000255" key="11">
    <source>
        <dbReference type="PROSITE-ProRule" id="PRU00766"/>
    </source>
</evidence>
<evidence type="ECO:0000255" key="12">
    <source>
        <dbReference type="PROSITE-ProRule" id="PRU01080"/>
    </source>
</evidence>
<evidence type="ECO:0000255" key="13">
    <source>
        <dbReference type="PROSITE-ProRule" id="PRU01219"/>
    </source>
</evidence>
<evidence type="ECO:0000256" key="14">
    <source>
        <dbReference type="SAM" id="MobiDB-lite"/>
    </source>
</evidence>
<evidence type="ECO:0000305" key="15"/>
<evidence type="ECO:0000305" key="16">
    <source>
    </source>
</evidence>
<protein>
    <recommendedName>
        <fullName>Genome polyprotein</fullName>
    </recommendedName>
    <component>
        <recommendedName>
            <fullName>P1 protease</fullName>
            <ecNumber>3.4.21.-</ecNumber>
        </recommendedName>
        <alternativeName>
            <fullName>Leader protease P1</fullName>
        </alternativeName>
        <alternativeName>
            <fullName>N-terminal protein</fullName>
        </alternativeName>
        <alternativeName>
            <fullName>P1 proteinase</fullName>
        </alternativeName>
    </component>
    <component>
        <recommendedName>
            <fullName>Helper component proteinase</fullName>
            <shortName>HC-pro</shortName>
            <ecNumber evidence="2">3.4.22.45</ecNumber>
        </recommendedName>
    </component>
    <component>
        <recommendedName>
            <fullName>Protein P3</fullName>
        </recommendedName>
    </component>
    <component>
        <recommendedName>
            <fullName>6 kDa protein 1</fullName>
            <shortName>6K1</shortName>
        </recommendedName>
    </component>
    <component>
        <recommendedName>
            <fullName>Cytoplasmic inclusion protein</fullName>
            <shortName>CI</shortName>
            <ecNumber>3.6.4.-</ecNumber>
        </recommendedName>
    </component>
    <component>
        <recommendedName>
            <fullName>6 kDa protein 2</fullName>
            <shortName>6K2</shortName>
        </recommendedName>
    </component>
    <component>
        <recommendedName>
            <fullName>Viral genome-linked protein</fullName>
        </recommendedName>
        <alternativeName>
            <fullName>VPg</fullName>
        </alternativeName>
    </component>
    <component>
        <recommendedName>
            <fullName>Nuclear inclusion protein A</fullName>
            <shortName>NI-a</shortName>
            <shortName>NIa</shortName>
            <ecNumber>3.4.22.44</ecNumber>
        </recommendedName>
        <alternativeName>
            <fullName>49 kDa proteinase</fullName>
            <shortName>49 kDa-Pro</shortName>
        </alternativeName>
        <alternativeName>
            <fullName>NIa-pro</fullName>
        </alternativeName>
    </component>
    <component>
        <recommendedName>
            <fullName>Nuclear inclusion protein B</fullName>
            <shortName>NI-b</shortName>
            <shortName>NIb</shortName>
            <ecNumber>2.7.7.48</ecNumber>
        </recommendedName>
        <alternativeName>
            <fullName>RNA-directed RNA polymerase</fullName>
        </alternativeName>
    </component>
    <component>
        <recommendedName>
            <fullName>Capsid protein</fullName>
            <shortName>CP</shortName>
        </recommendedName>
        <alternativeName>
            <fullName>Coat protein</fullName>
        </alternativeName>
    </component>
</protein>